<comment type="function">
    <text evidence="2 3 4">The small GTPases Rab are key regulators of intracellular membrane trafficking, from the formation of transport vesicles to their fusion with membranes. Rabs cycle between an inactive GDP-bound form and an active GTP-bound form that is able to recruit to membranes different sets of downstream effectors directly responsible for vesicle formation, movement, tethering and fusion (By similarity). RAB9B is involved in the transport of proteins between the endosomes and the trans Golgi network (By similarity). May use NDE1/NDEL1 as an effector to interact with the dynein motor complex in order to control retrograde trafficking of RAB9-associated late endosomes to the TGN (By similarity).</text>
</comment>
<comment type="catalytic activity">
    <reaction evidence="3">
        <text>GTP + H2O = GDP + phosphate + H(+)</text>
        <dbReference type="Rhea" id="RHEA:19669"/>
        <dbReference type="ChEBI" id="CHEBI:15377"/>
        <dbReference type="ChEBI" id="CHEBI:15378"/>
        <dbReference type="ChEBI" id="CHEBI:37565"/>
        <dbReference type="ChEBI" id="CHEBI:43474"/>
        <dbReference type="ChEBI" id="CHEBI:58189"/>
        <dbReference type="EC" id="3.6.5.2"/>
    </reaction>
    <physiologicalReaction direction="left-to-right" evidence="3">
        <dbReference type="Rhea" id="RHEA:19670"/>
    </physiologicalReaction>
</comment>
<comment type="cofactor">
    <cofactor evidence="4">
        <name>Mg(2+)</name>
        <dbReference type="ChEBI" id="CHEBI:18420"/>
    </cofactor>
</comment>
<comment type="activity regulation">
    <text evidence="5">Regulated by guanine nucleotide exchange factors (GEFs) which promote the exchange of bound GDP for free GTP. Regulated by GTPase activating proteins (GAPs) which increase the GTP hydrolysis activity. Inhibited by GDP dissociation inhibitors (GDIs).</text>
</comment>
<comment type="subunit">
    <text evidence="4 6">Interacts (GTP-bound form) with SGSM1; the GDP-bound form has much lower affinity for SGSM1 (Probable). The GTP-bound form but not the GDP-bound form interacts with HPS4 and the BLOC-3 complex (heterodimer of HPS1 and HPS4) but does not interact with HPS1 alone. Interacts (GTP-bound form) with NDE1 (By similarity).</text>
</comment>
<comment type="interaction">
    <interactant intactId="EBI-11568845">
        <id>Q8BHH2</id>
    </interactant>
    <interactant intactId="EBI-11568845">
        <id>Q8BHH2</id>
        <label>Rab9b</label>
    </interactant>
    <organismsDiffer>false</organismsDiffer>
    <experiments>2</experiments>
</comment>
<comment type="interaction">
    <interactant intactId="EBI-11568845">
        <id>Q8BHH2</id>
    </interactant>
    <interactant intactId="EBI-16121756">
        <id>Q8BPQ7-1</id>
        <label>Sgsm1</label>
    </interactant>
    <organismsDiffer>false</organismsDiffer>
    <experiments>3</experiments>
</comment>
<comment type="subcellular location">
    <subcellularLocation>
        <location evidence="5">Cell membrane</location>
        <topology evidence="5">Lipid-anchor</topology>
        <orientation evidence="5">Cytoplasmic side</orientation>
    </subcellularLocation>
    <subcellularLocation>
        <location evidence="1">Cytoplasmic vesicle</location>
        <location evidence="1">Phagosome membrane</location>
        <topology evidence="1">Lipid-anchor</topology>
        <orientation evidence="1">Cytoplasmic side</orientation>
    </subcellularLocation>
    <text evidence="1">Recruited to phagosomes containing S.aureus or Mycobacterium.</text>
</comment>
<comment type="domain">
    <text evidence="2">Switch 1, switch 2 and the interswitch regions are characteristic of Rab GTPases and mediate the interactions with Rab downstream effectors. The switch regions undergo conformational changes upon nucleotide binding which drives interaction with specific sets of effector proteins, with most effectors only binding to GTP-bound Rab.</text>
</comment>
<comment type="similarity">
    <text evidence="5">Belongs to the small GTPase superfamily. Rab family.</text>
</comment>
<organism>
    <name type="scientific">Mus musculus</name>
    <name type="common">Mouse</name>
    <dbReference type="NCBI Taxonomy" id="10090"/>
    <lineage>
        <taxon>Eukaryota</taxon>
        <taxon>Metazoa</taxon>
        <taxon>Chordata</taxon>
        <taxon>Craniata</taxon>
        <taxon>Vertebrata</taxon>
        <taxon>Euteleostomi</taxon>
        <taxon>Mammalia</taxon>
        <taxon>Eutheria</taxon>
        <taxon>Euarchontoglires</taxon>
        <taxon>Glires</taxon>
        <taxon>Rodentia</taxon>
        <taxon>Myomorpha</taxon>
        <taxon>Muroidea</taxon>
        <taxon>Muridae</taxon>
        <taxon>Murinae</taxon>
        <taxon>Mus</taxon>
        <taxon>Mus</taxon>
    </lineage>
</organism>
<name>RAB9B_MOUSE</name>
<reference key="1">
    <citation type="journal article" date="2005" name="Science">
        <title>The transcriptional landscape of the mammalian genome.</title>
        <authorList>
            <person name="Carninci P."/>
            <person name="Kasukawa T."/>
            <person name="Katayama S."/>
            <person name="Gough J."/>
            <person name="Frith M.C."/>
            <person name="Maeda N."/>
            <person name="Oyama R."/>
            <person name="Ravasi T."/>
            <person name="Lenhard B."/>
            <person name="Wells C."/>
            <person name="Kodzius R."/>
            <person name="Shimokawa K."/>
            <person name="Bajic V.B."/>
            <person name="Brenner S.E."/>
            <person name="Batalov S."/>
            <person name="Forrest A.R."/>
            <person name="Zavolan M."/>
            <person name="Davis M.J."/>
            <person name="Wilming L.G."/>
            <person name="Aidinis V."/>
            <person name="Allen J.E."/>
            <person name="Ambesi-Impiombato A."/>
            <person name="Apweiler R."/>
            <person name="Aturaliya R.N."/>
            <person name="Bailey T.L."/>
            <person name="Bansal M."/>
            <person name="Baxter L."/>
            <person name="Beisel K.W."/>
            <person name="Bersano T."/>
            <person name="Bono H."/>
            <person name="Chalk A.M."/>
            <person name="Chiu K.P."/>
            <person name="Choudhary V."/>
            <person name="Christoffels A."/>
            <person name="Clutterbuck D.R."/>
            <person name="Crowe M.L."/>
            <person name="Dalla E."/>
            <person name="Dalrymple B.P."/>
            <person name="de Bono B."/>
            <person name="Della Gatta G."/>
            <person name="di Bernardo D."/>
            <person name="Down T."/>
            <person name="Engstrom P."/>
            <person name="Fagiolini M."/>
            <person name="Faulkner G."/>
            <person name="Fletcher C.F."/>
            <person name="Fukushima T."/>
            <person name="Furuno M."/>
            <person name="Futaki S."/>
            <person name="Gariboldi M."/>
            <person name="Georgii-Hemming P."/>
            <person name="Gingeras T.R."/>
            <person name="Gojobori T."/>
            <person name="Green R.E."/>
            <person name="Gustincich S."/>
            <person name="Harbers M."/>
            <person name="Hayashi Y."/>
            <person name="Hensch T.K."/>
            <person name="Hirokawa N."/>
            <person name="Hill D."/>
            <person name="Huminiecki L."/>
            <person name="Iacono M."/>
            <person name="Ikeo K."/>
            <person name="Iwama A."/>
            <person name="Ishikawa T."/>
            <person name="Jakt M."/>
            <person name="Kanapin A."/>
            <person name="Katoh M."/>
            <person name="Kawasawa Y."/>
            <person name="Kelso J."/>
            <person name="Kitamura H."/>
            <person name="Kitano H."/>
            <person name="Kollias G."/>
            <person name="Krishnan S.P."/>
            <person name="Kruger A."/>
            <person name="Kummerfeld S.K."/>
            <person name="Kurochkin I.V."/>
            <person name="Lareau L.F."/>
            <person name="Lazarevic D."/>
            <person name="Lipovich L."/>
            <person name="Liu J."/>
            <person name="Liuni S."/>
            <person name="McWilliam S."/>
            <person name="Madan Babu M."/>
            <person name="Madera M."/>
            <person name="Marchionni L."/>
            <person name="Matsuda H."/>
            <person name="Matsuzawa S."/>
            <person name="Miki H."/>
            <person name="Mignone F."/>
            <person name="Miyake S."/>
            <person name="Morris K."/>
            <person name="Mottagui-Tabar S."/>
            <person name="Mulder N."/>
            <person name="Nakano N."/>
            <person name="Nakauchi H."/>
            <person name="Ng P."/>
            <person name="Nilsson R."/>
            <person name="Nishiguchi S."/>
            <person name="Nishikawa S."/>
            <person name="Nori F."/>
            <person name="Ohara O."/>
            <person name="Okazaki Y."/>
            <person name="Orlando V."/>
            <person name="Pang K.C."/>
            <person name="Pavan W.J."/>
            <person name="Pavesi G."/>
            <person name="Pesole G."/>
            <person name="Petrovsky N."/>
            <person name="Piazza S."/>
            <person name="Reed J."/>
            <person name="Reid J.F."/>
            <person name="Ring B.Z."/>
            <person name="Ringwald M."/>
            <person name="Rost B."/>
            <person name="Ruan Y."/>
            <person name="Salzberg S.L."/>
            <person name="Sandelin A."/>
            <person name="Schneider C."/>
            <person name="Schoenbach C."/>
            <person name="Sekiguchi K."/>
            <person name="Semple C.A."/>
            <person name="Seno S."/>
            <person name="Sessa L."/>
            <person name="Sheng Y."/>
            <person name="Shibata Y."/>
            <person name="Shimada H."/>
            <person name="Shimada K."/>
            <person name="Silva D."/>
            <person name="Sinclair B."/>
            <person name="Sperling S."/>
            <person name="Stupka E."/>
            <person name="Sugiura K."/>
            <person name="Sultana R."/>
            <person name="Takenaka Y."/>
            <person name="Taki K."/>
            <person name="Tammoja K."/>
            <person name="Tan S.L."/>
            <person name="Tang S."/>
            <person name="Taylor M.S."/>
            <person name="Tegner J."/>
            <person name="Teichmann S.A."/>
            <person name="Ueda H.R."/>
            <person name="van Nimwegen E."/>
            <person name="Verardo R."/>
            <person name="Wei C.L."/>
            <person name="Yagi K."/>
            <person name="Yamanishi H."/>
            <person name="Zabarovsky E."/>
            <person name="Zhu S."/>
            <person name="Zimmer A."/>
            <person name="Hide W."/>
            <person name="Bult C."/>
            <person name="Grimmond S.M."/>
            <person name="Teasdale R.D."/>
            <person name="Liu E.T."/>
            <person name="Brusic V."/>
            <person name="Quackenbush J."/>
            <person name="Wahlestedt C."/>
            <person name="Mattick J.S."/>
            <person name="Hume D.A."/>
            <person name="Kai C."/>
            <person name="Sasaki D."/>
            <person name="Tomaru Y."/>
            <person name="Fukuda S."/>
            <person name="Kanamori-Katayama M."/>
            <person name="Suzuki M."/>
            <person name="Aoki J."/>
            <person name="Arakawa T."/>
            <person name="Iida J."/>
            <person name="Imamura K."/>
            <person name="Itoh M."/>
            <person name="Kato T."/>
            <person name="Kawaji H."/>
            <person name="Kawagashira N."/>
            <person name="Kawashima T."/>
            <person name="Kojima M."/>
            <person name="Kondo S."/>
            <person name="Konno H."/>
            <person name="Nakano K."/>
            <person name="Ninomiya N."/>
            <person name="Nishio T."/>
            <person name="Okada M."/>
            <person name="Plessy C."/>
            <person name="Shibata K."/>
            <person name="Shiraki T."/>
            <person name="Suzuki S."/>
            <person name="Tagami M."/>
            <person name="Waki K."/>
            <person name="Watahiki A."/>
            <person name="Okamura-Oho Y."/>
            <person name="Suzuki H."/>
            <person name="Kawai J."/>
            <person name="Hayashizaki Y."/>
        </authorList>
    </citation>
    <scope>NUCLEOTIDE SEQUENCE [LARGE SCALE MRNA]</scope>
    <source>
        <strain>C57BL/6J</strain>
        <tissue>Diencephalon</tissue>
        <tissue>Spinal cord</tissue>
    </source>
</reference>
<reference key="2">
    <citation type="journal article" date="2010" name="Cell">
        <title>A tissue-specific atlas of mouse protein phosphorylation and expression.</title>
        <authorList>
            <person name="Huttlin E.L."/>
            <person name="Jedrychowski M.P."/>
            <person name="Elias J.E."/>
            <person name="Goswami T."/>
            <person name="Rad R."/>
            <person name="Beausoleil S.A."/>
            <person name="Villen J."/>
            <person name="Haas W."/>
            <person name="Sowa M.E."/>
            <person name="Gygi S.P."/>
        </authorList>
    </citation>
    <scope>PHOSPHORYLATION [LARGE SCALE ANALYSIS] AT SER-34</scope>
    <scope>IDENTIFICATION BY MASS SPECTROMETRY [LARGE SCALE ANALYSIS]</scope>
    <source>
        <tissue>Brain</tissue>
    </source>
</reference>
<reference key="3">
    <citation type="journal article" date="2014" name="Structure">
        <title>Crystal structure of the Rab9A-RUTBC2 RBD complex reveals the molecular basis for the binding specificity of Rab9A with RUTBC2.</title>
        <authorList>
            <person name="Zhang Z."/>
            <person name="Wang S."/>
            <person name="Shen T."/>
            <person name="Chen J."/>
            <person name="Ding J."/>
        </authorList>
    </citation>
    <scope>INTERACTION WITH SGSM1</scope>
</reference>
<dbReference type="EC" id="3.6.5.2" evidence="3"/>
<dbReference type="EMBL" id="AK034442">
    <property type="protein sequence ID" value="BAC28710.1"/>
    <property type="molecule type" value="mRNA"/>
</dbReference>
<dbReference type="EMBL" id="AK049693">
    <property type="protein sequence ID" value="BAC33876.1"/>
    <property type="molecule type" value="mRNA"/>
</dbReference>
<dbReference type="CCDS" id="CCDS30425.1"/>
<dbReference type="RefSeq" id="NP_795945.1">
    <property type="nucleotide sequence ID" value="NM_176971.3"/>
</dbReference>
<dbReference type="SMR" id="Q8BHH2"/>
<dbReference type="BioGRID" id="235417">
    <property type="interactions" value="1"/>
</dbReference>
<dbReference type="DIP" id="DIP-61069N"/>
<dbReference type="FunCoup" id="Q8BHH2">
    <property type="interactions" value="482"/>
</dbReference>
<dbReference type="IntAct" id="Q8BHH2">
    <property type="interactions" value="12"/>
</dbReference>
<dbReference type="STRING" id="10090.ENSMUSP00000049739"/>
<dbReference type="iPTMnet" id="Q8BHH2"/>
<dbReference type="PhosphoSitePlus" id="Q8BHH2"/>
<dbReference type="jPOST" id="Q8BHH2"/>
<dbReference type="PaxDb" id="10090-ENSMUSP00000049739"/>
<dbReference type="ProteomicsDB" id="253156"/>
<dbReference type="ABCD" id="Q8BHH2">
    <property type="antibodies" value="22 sequenced antibodies"/>
</dbReference>
<dbReference type="Antibodypedia" id="29164">
    <property type="antibodies" value="89 antibodies from 27 providers"/>
</dbReference>
<dbReference type="DNASU" id="319642"/>
<dbReference type="Ensembl" id="ENSMUST00000058814.7">
    <property type="protein sequence ID" value="ENSMUSP00000049739.7"/>
    <property type="gene ID" value="ENSMUSG00000043463.7"/>
</dbReference>
<dbReference type="GeneID" id="319642"/>
<dbReference type="KEGG" id="mmu:319642"/>
<dbReference type="UCSC" id="uc009uje.1">
    <property type="organism name" value="mouse"/>
</dbReference>
<dbReference type="AGR" id="MGI:2442454"/>
<dbReference type="CTD" id="51209"/>
<dbReference type="MGI" id="MGI:2442454">
    <property type="gene designation" value="Rab9b"/>
</dbReference>
<dbReference type="VEuPathDB" id="HostDB:ENSMUSG00000043463"/>
<dbReference type="eggNOG" id="KOG0394">
    <property type="taxonomic scope" value="Eukaryota"/>
</dbReference>
<dbReference type="GeneTree" id="ENSGT00940000160481"/>
<dbReference type="HOGENOM" id="CLU_041217_10_6_1"/>
<dbReference type="InParanoid" id="Q8BHH2"/>
<dbReference type="OMA" id="AKAWCME"/>
<dbReference type="OrthoDB" id="1436450at2759"/>
<dbReference type="PhylomeDB" id="Q8BHH2"/>
<dbReference type="TreeFam" id="TF326442"/>
<dbReference type="Reactome" id="R-MMU-6798695">
    <property type="pathway name" value="Neutrophil degranulation"/>
</dbReference>
<dbReference type="Reactome" id="R-MMU-6811440">
    <property type="pathway name" value="Retrograde transport at the Trans-Golgi-Network"/>
</dbReference>
<dbReference type="Reactome" id="R-MMU-8873719">
    <property type="pathway name" value="RAB geranylgeranylation"/>
</dbReference>
<dbReference type="Reactome" id="R-MMU-8876198">
    <property type="pathway name" value="RAB GEFs exchange GTP for GDP on RABs"/>
</dbReference>
<dbReference type="Reactome" id="R-MMU-9706019">
    <property type="pathway name" value="RHOBTB3 ATPase cycle"/>
</dbReference>
<dbReference type="BioGRID-ORCS" id="319642">
    <property type="hits" value="2 hits in 77 CRISPR screens"/>
</dbReference>
<dbReference type="ChiTaRS" id="Rab9b">
    <property type="organism name" value="mouse"/>
</dbReference>
<dbReference type="PRO" id="PR:Q8BHH2"/>
<dbReference type="Proteomes" id="UP000000589">
    <property type="component" value="Chromosome X"/>
</dbReference>
<dbReference type="RNAct" id="Q8BHH2">
    <property type="molecule type" value="protein"/>
</dbReference>
<dbReference type="Bgee" id="ENSMUSG00000043463">
    <property type="expression patterns" value="Expressed in ventromedial nucleus of hypothalamus and 80 other cell types or tissues"/>
</dbReference>
<dbReference type="ExpressionAtlas" id="Q8BHH2">
    <property type="expression patterns" value="baseline and differential"/>
</dbReference>
<dbReference type="GO" id="GO:0045335">
    <property type="term" value="C:phagocytic vesicle"/>
    <property type="evidence" value="ECO:0000250"/>
    <property type="project" value="UniProtKB"/>
</dbReference>
<dbReference type="GO" id="GO:0030670">
    <property type="term" value="C:phagocytic vesicle membrane"/>
    <property type="evidence" value="ECO:0007669"/>
    <property type="project" value="UniProtKB-SubCell"/>
</dbReference>
<dbReference type="GO" id="GO:0005886">
    <property type="term" value="C:plasma membrane"/>
    <property type="evidence" value="ECO:0007669"/>
    <property type="project" value="UniProtKB-SubCell"/>
</dbReference>
<dbReference type="GO" id="GO:0003925">
    <property type="term" value="F:G protein activity"/>
    <property type="evidence" value="ECO:0007669"/>
    <property type="project" value="Ensembl"/>
</dbReference>
<dbReference type="GO" id="GO:0019003">
    <property type="term" value="F:GDP binding"/>
    <property type="evidence" value="ECO:0000250"/>
    <property type="project" value="UniProtKB"/>
</dbReference>
<dbReference type="GO" id="GO:0005525">
    <property type="term" value="F:GTP binding"/>
    <property type="evidence" value="ECO:0007669"/>
    <property type="project" value="UniProtKB-KW"/>
</dbReference>
<dbReference type="GO" id="GO:0042802">
    <property type="term" value="F:identical protein binding"/>
    <property type="evidence" value="ECO:0000353"/>
    <property type="project" value="IntAct"/>
</dbReference>
<dbReference type="GO" id="GO:0015031">
    <property type="term" value="P:protein transport"/>
    <property type="evidence" value="ECO:0007669"/>
    <property type="project" value="UniProtKB-KW"/>
</dbReference>
<dbReference type="GO" id="GO:0032482">
    <property type="term" value="P:Rab protein signal transduction"/>
    <property type="evidence" value="ECO:0007669"/>
    <property type="project" value="InterPro"/>
</dbReference>
<dbReference type="GO" id="GO:0006898">
    <property type="term" value="P:receptor-mediated endocytosis"/>
    <property type="evidence" value="ECO:0007669"/>
    <property type="project" value="Ensembl"/>
</dbReference>
<dbReference type="CDD" id="cd04116">
    <property type="entry name" value="Rab9"/>
    <property type="match status" value="1"/>
</dbReference>
<dbReference type="FunFam" id="3.40.50.300:FF:000360">
    <property type="entry name" value="RAB9B, member RAS oncogene family"/>
    <property type="match status" value="1"/>
</dbReference>
<dbReference type="Gene3D" id="3.40.50.300">
    <property type="entry name" value="P-loop containing nucleotide triphosphate hydrolases"/>
    <property type="match status" value="1"/>
</dbReference>
<dbReference type="InterPro" id="IPR027417">
    <property type="entry name" value="P-loop_NTPase"/>
</dbReference>
<dbReference type="InterPro" id="IPR041824">
    <property type="entry name" value="Rab9"/>
</dbReference>
<dbReference type="InterPro" id="IPR005225">
    <property type="entry name" value="Small_GTP-bd"/>
</dbReference>
<dbReference type="InterPro" id="IPR001806">
    <property type="entry name" value="Small_GTPase"/>
</dbReference>
<dbReference type="NCBIfam" id="TIGR00231">
    <property type="entry name" value="small_GTP"/>
    <property type="match status" value="1"/>
</dbReference>
<dbReference type="PANTHER" id="PTHR47981">
    <property type="entry name" value="RAB FAMILY"/>
    <property type="match status" value="1"/>
</dbReference>
<dbReference type="PANTHER" id="PTHR47981:SF17">
    <property type="entry name" value="RAS-RELATED PROTEIN RAB-9B"/>
    <property type="match status" value="1"/>
</dbReference>
<dbReference type="Pfam" id="PF00071">
    <property type="entry name" value="Ras"/>
    <property type="match status" value="1"/>
</dbReference>
<dbReference type="PRINTS" id="PR00449">
    <property type="entry name" value="RASTRNSFRMNG"/>
</dbReference>
<dbReference type="SMART" id="SM00175">
    <property type="entry name" value="RAB"/>
    <property type="match status" value="1"/>
</dbReference>
<dbReference type="SMART" id="SM00176">
    <property type="entry name" value="RAN"/>
    <property type="match status" value="1"/>
</dbReference>
<dbReference type="SMART" id="SM00173">
    <property type="entry name" value="RAS"/>
    <property type="match status" value="1"/>
</dbReference>
<dbReference type="SMART" id="SM00174">
    <property type="entry name" value="RHO"/>
    <property type="match status" value="1"/>
</dbReference>
<dbReference type="SUPFAM" id="SSF52540">
    <property type="entry name" value="P-loop containing nucleoside triphosphate hydrolases"/>
    <property type="match status" value="1"/>
</dbReference>
<dbReference type="PROSITE" id="PS51419">
    <property type="entry name" value="RAB"/>
    <property type="match status" value="1"/>
</dbReference>
<keyword id="KW-1003">Cell membrane</keyword>
<keyword id="KW-0968">Cytoplasmic vesicle</keyword>
<keyword id="KW-0342">GTP-binding</keyword>
<keyword id="KW-0378">Hydrolase</keyword>
<keyword id="KW-0449">Lipoprotein</keyword>
<keyword id="KW-0460">Magnesium</keyword>
<keyword id="KW-0472">Membrane</keyword>
<keyword id="KW-0479">Metal-binding</keyword>
<keyword id="KW-0547">Nucleotide-binding</keyword>
<keyword id="KW-0597">Phosphoprotein</keyword>
<keyword id="KW-0636">Prenylation</keyword>
<keyword id="KW-0653">Protein transport</keyword>
<keyword id="KW-1185">Reference proteome</keyword>
<keyword id="KW-0813">Transport</keyword>
<sequence>MSGKSLLLKVILLGDGGVGKSSLMNRYVTNKFDSQAFHTIGVEFLNRDLEVDGRFVTLQIWDTAGQERFKSLRTPFYRGADCCLLTFSVDDRQSFENLGNWQKEFIYYADVKDPDHFPFVVLGNKVDKEDRQVTTEEAQAWCMENGNYPYLETSAKDDTNVTVAFEEAVRQVLAVEEQLEHCMLGHTIDLNSGSKASSSCC</sequence>
<feature type="chain" id="PRO_0000121143" description="Ras-related protein Rab-9B">
    <location>
        <begin position="1"/>
        <end position="201"/>
    </location>
</feature>
<feature type="short sequence motif" description="Switch 1" evidence="2">
    <location>
        <begin position="31"/>
        <end position="42"/>
    </location>
</feature>
<feature type="short sequence motif" description="Switch 2" evidence="2">
    <location>
        <begin position="64"/>
        <end position="78"/>
    </location>
</feature>
<feature type="binding site" evidence="4">
    <location>
        <position position="18"/>
    </location>
    <ligand>
        <name>GTP</name>
        <dbReference type="ChEBI" id="CHEBI:37565"/>
    </ligand>
</feature>
<feature type="binding site" evidence="4">
    <location>
        <position position="19"/>
    </location>
    <ligand>
        <name>GTP</name>
        <dbReference type="ChEBI" id="CHEBI:37565"/>
    </ligand>
</feature>
<feature type="binding site" evidence="4">
    <location>
        <position position="20"/>
    </location>
    <ligand>
        <name>GTP</name>
        <dbReference type="ChEBI" id="CHEBI:37565"/>
    </ligand>
</feature>
<feature type="binding site" evidence="4">
    <location>
        <position position="21"/>
    </location>
    <ligand>
        <name>GTP</name>
        <dbReference type="ChEBI" id="CHEBI:37565"/>
    </ligand>
</feature>
<feature type="binding site" evidence="4">
    <location>
        <position position="21"/>
    </location>
    <ligand>
        <name>Mg(2+)</name>
        <dbReference type="ChEBI" id="CHEBI:18420"/>
    </ligand>
</feature>
<feature type="binding site" evidence="4">
    <location>
        <position position="22"/>
    </location>
    <ligand>
        <name>GTP</name>
        <dbReference type="ChEBI" id="CHEBI:37565"/>
    </ligand>
</feature>
<feature type="binding site" evidence="4">
    <location>
        <position position="33"/>
    </location>
    <ligand>
        <name>GTP</name>
        <dbReference type="ChEBI" id="CHEBI:37565"/>
    </ligand>
</feature>
<feature type="binding site" evidence="4">
    <location>
        <position position="34"/>
    </location>
    <ligand>
        <name>GTP</name>
        <dbReference type="ChEBI" id="CHEBI:37565"/>
    </ligand>
</feature>
<feature type="binding site" evidence="4">
    <location>
        <position position="36"/>
    </location>
    <ligand>
        <name>GTP</name>
        <dbReference type="ChEBI" id="CHEBI:37565"/>
    </ligand>
</feature>
<feature type="binding site" evidence="4">
    <location>
        <position position="38"/>
    </location>
    <ligand>
        <name>GTP</name>
        <dbReference type="ChEBI" id="CHEBI:37565"/>
    </ligand>
</feature>
<feature type="binding site" evidence="4">
    <location>
        <position position="39"/>
    </location>
    <ligand>
        <name>GTP</name>
        <dbReference type="ChEBI" id="CHEBI:37565"/>
    </ligand>
</feature>
<feature type="binding site" evidence="4">
    <location>
        <position position="39"/>
    </location>
    <ligand>
        <name>Mg(2+)</name>
        <dbReference type="ChEBI" id="CHEBI:18420"/>
    </ligand>
</feature>
<feature type="binding site" evidence="4">
    <location>
        <position position="62"/>
    </location>
    <ligand>
        <name>Mg(2+)</name>
        <dbReference type="ChEBI" id="CHEBI:18420"/>
    </ligand>
</feature>
<feature type="binding site" evidence="4">
    <location>
        <position position="65"/>
    </location>
    <ligand>
        <name>GTP</name>
        <dbReference type="ChEBI" id="CHEBI:37565"/>
    </ligand>
</feature>
<feature type="binding site" evidence="4">
    <location>
        <position position="124"/>
    </location>
    <ligand>
        <name>GTP</name>
        <dbReference type="ChEBI" id="CHEBI:37565"/>
    </ligand>
</feature>
<feature type="binding site" evidence="4">
    <location>
        <position position="125"/>
    </location>
    <ligand>
        <name>GTP</name>
        <dbReference type="ChEBI" id="CHEBI:37565"/>
    </ligand>
</feature>
<feature type="binding site" evidence="4">
    <location>
        <position position="155"/>
    </location>
    <ligand>
        <name>GTP</name>
        <dbReference type="ChEBI" id="CHEBI:37565"/>
    </ligand>
</feature>
<feature type="binding site" evidence="4">
    <location>
        <position position="156"/>
    </location>
    <ligand>
        <name>GTP</name>
        <dbReference type="ChEBI" id="CHEBI:37565"/>
    </ligand>
</feature>
<feature type="modified residue" description="Phosphoserine" evidence="8">
    <location>
        <position position="34"/>
    </location>
</feature>
<feature type="lipid moiety-binding region" description="S-geranylgeranyl cysteine" evidence="1">
    <location>
        <position position="200"/>
    </location>
</feature>
<feature type="lipid moiety-binding region" description="S-geranylgeranyl cysteine" evidence="1">
    <location>
        <position position="201"/>
    </location>
</feature>
<protein>
    <recommendedName>
        <fullName>Ras-related protein Rab-9B</fullName>
        <ecNumber evidence="3">3.6.5.2</ecNumber>
    </recommendedName>
</protein>
<proteinExistence type="evidence at protein level"/>
<gene>
    <name evidence="7" type="primary">Rab9b</name>
</gene>
<evidence type="ECO:0000250" key="1"/>
<evidence type="ECO:0000250" key="2">
    <source>
        <dbReference type="UniProtKB" id="P51151"/>
    </source>
</evidence>
<evidence type="ECO:0000250" key="3">
    <source>
        <dbReference type="UniProtKB" id="P62820"/>
    </source>
</evidence>
<evidence type="ECO:0000250" key="4">
    <source>
        <dbReference type="UniProtKB" id="Q9NP90"/>
    </source>
</evidence>
<evidence type="ECO:0000305" key="5"/>
<evidence type="ECO:0000305" key="6">
    <source>
    </source>
</evidence>
<evidence type="ECO:0000312" key="7">
    <source>
        <dbReference type="MGI" id="MGI:2442454"/>
    </source>
</evidence>
<evidence type="ECO:0007744" key="8">
    <source>
    </source>
</evidence>
<accession>Q8BHH2</accession>